<feature type="chain" id="PRO_0000129299" description="Large ribosomal subunit protein uL4">
    <location>
        <begin position="1"/>
        <end position="210"/>
    </location>
</feature>
<accession>P49665</accession>
<accession>Q9EVT8</accession>
<comment type="function">
    <text evidence="1">One of the primary rRNA binding proteins, this protein initially binds near the 5'-end of the 23S rRNA. It is important during the early stages of 50S assembly. It makes multiple contacts with different domains of the 23S rRNA in the assembled 50S subunit and ribosome (By similarity).</text>
</comment>
<comment type="function">
    <text evidence="1">Forms part of the polypeptide exit tunnel.</text>
</comment>
<comment type="subunit">
    <text evidence="1">Part of the 50S ribosomal subunit.</text>
</comment>
<comment type="similarity">
    <text evidence="2">Belongs to the universal ribosomal protein uL4 family.</text>
</comment>
<name>RL4_THETH</name>
<reference key="1">
    <citation type="submission" date="1998-03" db="EMBL/GenBank/DDBJ databases">
        <title>rRNA binding ribosomal protein L4 from Thermus thermophilus.</title>
        <authorList>
            <person name="Rak A."/>
            <person name="Wolf-Watz M."/>
            <person name="Avliakulov N.K."/>
            <person name="Garber M.B."/>
        </authorList>
    </citation>
    <scope>NUCLEOTIDE SEQUENCE [GENOMIC DNA]</scope>
    <source>
        <strain>VK1</strain>
    </source>
</reference>
<dbReference type="EMBL" id="AJ224857">
    <property type="protein sequence ID" value="CAC21224.1"/>
    <property type="molecule type" value="Genomic_DNA"/>
</dbReference>
<dbReference type="SMR" id="P49665"/>
<dbReference type="GO" id="GO:1990904">
    <property type="term" value="C:ribonucleoprotein complex"/>
    <property type="evidence" value="ECO:0007669"/>
    <property type="project" value="UniProtKB-KW"/>
</dbReference>
<dbReference type="GO" id="GO:0005840">
    <property type="term" value="C:ribosome"/>
    <property type="evidence" value="ECO:0007669"/>
    <property type="project" value="UniProtKB-KW"/>
</dbReference>
<dbReference type="GO" id="GO:0019843">
    <property type="term" value="F:rRNA binding"/>
    <property type="evidence" value="ECO:0007669"/>
    <property type="project" value="UniProtKB-UniRule"/>
</dbReference>
<dbReference type="GO" id="GO:0003735">
    <property type="term" value="F:structural constituent of ribosome"/>
    <property type="evidence" value="ECO:0007669"/>
    <property type="project" value="InterPro"/>
</dbReference>
<dbReference type="GO" id="GO:0006412">
    <property type="term" value="P:translation"/>
    <property type="evidence" value="ECO:0007669"/>
    <property type="project" value="UniProtKB-UniRule"/>
</dbReference>
<dbReference type="Gene3D" id="3.40.1370.10">
    <property type="match status" value="1"/>
</dbReference>
<dbReference type="HAMAP" id="MF_01328_B">
    <property type="entry name" value="Ribosomal_uL4_B"/>
    <property type="match status" value="1"/>
</dbReference>
<dbReference type="InterPro" id="IPR002136">
    <property type="entry name" value="Ribosomal_uL4"/>
</dbReference>
<dbReference type="InterPro" id="IPR013005">
    <property type="entry name" value="Ribosomal_uL4-like"/>
</dbReference>
<dbReference type="InterPro" id="IPR023574">
    <property type="entry name" value="Ribosomal_uL4_dom_sf"/>
</dbReference>
<dbReference type="NCBIfam" id="TIGR03953">
    <property type="entry name" value="rplD_bact"/>
    <property type="match status" value="1"/>
</dbReference>
<dbReference type="PANTHER" id="PTHR10746">
    <property type="entry name" value="50S RIBOSOMAL PROTEIN L4"/>
    <property type="match status" value="1"/>
</dbReference>
<dbReference type="PANTHER" id="PTHR10746:SF6">
    <property type="entry name" value="LARGE RIBOSOMAL SUBUNIT PROTEIN UL4M"/>
    <property type="match status" value="1"/>
</dbReference>
<dbReference type="Pfam" id="PF00573">
    <property type="entry name" value="Ribosomal_L4"/>
    <property type="match status" value="1"/>
</dbReference>
<dbReference type="SUPFAM" id="SSF52166">
    <property type="entry name" value="Ribosomal protein L4"/>
    <property type="match status" value="1"/>
</dbReference>
<gene>
    <name type="primary">rplD</name>
    <name type="synonym">rpl4</name>
</gene>
<evidence type="ECO:0000250" key="1"/>
<evidence type="ECO:0000305" key="2"/>
<sequence length="210" mass="23255">MKEVAVYQIPVLSPSGRRELAADLPAEINPHLLWEVVRWQLAKRRRGTASTKTRGEVAYSGRKIWPQKHTGRARHGDIGAPIFVGGGVVFGPKPRDYSYTLPKKVRKKGLAMAVADRAREGKLLLVEAFAGVERQDQAIPAWAKEAGLDGSESVLLVTGNELVRRAARNLPWVVTLAPEGLNVYDIVRTERLVMDLDAWEVFQNRIGGEA</sequence>
<protein>
    <recommendedName>
        <fullName evidence="2">Large ribosomal subunit protein uL4</fullName>
    </recommendedName>
    <alternativeName>
        <fullName>50S ribosomal protein L4</fullName>
    </alternativeName>
</protein>
<organism>
    <name type="scientific">Thermus thermophilus</name>
    <dbReference type="NCBI Taxonomy" id="274"/>
    <lineage>
        <taxon>Bacteria</taxon>
        <taxon>Thermotogati</taxon>
        <taxon>Deinococcota</taxon>
        <taxon>Deinococci</taxon>
        <taxon>Thermales</taxon>
        <taxon>Thermaceae</taxon>
        <taxon>Thermus</taxon>
    </lineage>
</organism>
<proteinExistence type="inferred from homology"/>
<keyword id="KW-0687">Ribonucleoprotein</keyword>
<keyword id="KW-0689">Ribosomal protein</keyword>
<keyword id="KW-0694">RNA-binding</keyword>
<keyword id="KW-0699">rRNA-binding</keyword>